<proteinExistence type="inferred from homology"/>
<comment type="function">
    <text evidence="1">Purine salvage pathway enzyme that catalyzes the transfer of the ribosyl-5-phosphate group from 5-phospho-alpha-D-ribose 1-diphosphate (PRPP) to the N9 position of the 6-oxopurines guanine and xanthine to form the corresponding ribonucleotides GMP (guanosine 5'-monophosphate) and XMP (xanthosine 5'-monophosphate), with the release of PPi. To a lesser extent, also acts on hypoxanthine.</text>
</comment>
<comment type="catalytic activity">
    <reaction evidence="1">
        <text>GMP + diphosphate = guanine + 5-phospho-alpha-D-ribose 1-diphosphate</text>
        <dbReference type="Rhea" id="RHEA:25424"/>
        <dbReference type="ChEBI" id="CHEBI:16235"/>
        <dbReference type="ChEBI" id="CHEBI:33019"/>
        <dbReference type="ChEBI" id="CHEBI:58017"/>
        <dbReference type="ChEBI" id="CHEBI:58115"/>
    </reaction>
    <physiologicalReaction direction="right-to-left" evidence="1">
        <dbReference type="Rhea" id="RHEA:25426"/>
    </physiologicalReaction>
</comment>
<comment type="catalytic activity">
    <reaction evidence="1">
        <text>XMP + diphosphate = xanthine + 5-phospho-alpha-D-ribose 1-diphosphate</text>
        <dbReference type="Rhea" id="RHEA:10800"/>
        <dbReference type="ChEBI" id="CHEBI:17712"/>
        <dbReference type="ChEBI" id="CHEBI:33019"/>
        <dbReference type="ChEBI" id="CHEBI:57464"/>
        <dbReference type="ChEBI" id="CHEBI:58017"/>
        <dbReference type="EC" id="2.4.2.22"/>
    </reaction>
    <physiologicalReaction direction="right-to-left" evidence="1">
        <dbReference type="Rhea" id="RHEA:10802"/>
    </physiologicalReaction>
</comment>
<comment type="catalytic activity">
    <reaction evidence="1">
        <text>IMP + diphosphate = hypoxanthine + 5-phospho-alpha-D-ribose 1-diphosphate</text>
        <dbReference type="Rhea" id="RHEA:17973"/>
        <dbReference type="ChEBI" id="CHEBI:17368"/>
        <dbReference type="ChEBI" id="CHEBI:33019"/>
        <dbReference type="ChEBI" id="CHEBI:58017"/>
        <dbReference type="ChEBI" id="CHEBI:58053"/>
    </reaction>
    <physiologicalReaction direction="right-to-left" evidence="1">
        <dbReference type="Rhea" id="RHEA:17975"/>
    </physiologicalReaction>
</comment>
<comment type="cofactor">
    <cofactor evidence="1">
        <name>Mg(2+)</name>
        <dbReference type="ChEBI" id="CHEBI:18420"/>
    </cofactor>
</comment>
<comment type="pathway">
    <text evidence="1">Purine metabolism; GMP biosynthesis via salvage pathway; GMP from guanine: step 1/1.</text>
</comment>
<comment type="pathway">
    <text evidence="1">Purine metabolism; XMP biosynthesis via salvage pathway; XMP from xanthine: step 1/1.</text>
</comment>
<comment type="subunit">
    <text evidence="1">Homotetramer.</text>
</comment>
<comment type="subcellular location">
    <subcellularLocation>
        <location evidence="1">Cell inner membrane</location>
        <topology evidence="1">Peripheral membrane protein</topology>
    </subcellularLocation>
</comment>
<comment type="similarity">
    <text evidence="1">Belongs to the purine/pyrimidine phosphoribosyltransferase family. XGPT subfamily.</text>
</comment>
<protein>
    <recommendedName>
        <fullName evidence="1">Xanthine-guanine phosphoribosyltransferase</fullName>
        <shortName evidence="1">XGPRT</shortName>
        <ecNumber evidence="1">2.4.2.-</ecNumber>
        <ecNumber evidence="1">2.4.2.22</ecNumber>
    </recommendedName>
    <alternativeName>
        <fullName evidence="1">Xanthine phosphoribosyltransferase</fullName>
    </alternativeName>
</protein>
<feature type="chain" id="PRO_1000070608" description="Xanthine-guanine phosphoribosyltransferase">
    <location>
        <begin position="1"/>
        <end position="152"/>
    </location>
</feature>
<feature type="binding site" evidence="1">
    <location>
        <begin position="37"/>
        <end position="38"/>
    </location>
    <ligand>
        <name>5-phospho-alpha-D-ribose 1-diphosphate</name>
        <dbReference type="ChEBI" id="CHEBI:58017"/>
    </ligand>
</feature>
<feature type="binding site" evidence="1">
    <location>
        <position position="69"/>
    </location>
    <ligand>
        <name>5-phospho-alpha-D-ribose 1-diphosphate</name>
        <dbReference type="ChEBI" id="CHEBI:58017"/>
    </ligand>
</feature>
<feature type="binding site" evidence="1">
    <location>
        <position position="69"/>
    </location>
    <ligand>
        <name>GMP</name>
        <dbReference type="ChEBI" id="CHEBI:58115"/>
    </ligand>
</feature>
<feature type="binding site" evidence="1">
    <location>
        <begin position="88"/>
        <end position="96"/>
    </location>
    <ligand>
        <name>5-phospho-alpha-D-ribose 1-diphosphate</name>
        <dbReference type="ChEBI" id="CHEBI:58017"/>
    </ligand>
</feature>
<feature type="binding site" evidence="1">
    <location>
        <position position="89"/>
    </location>
    <ligand>
        <name>Mg(2+)</name>
        <dbReference type="ChEBI" id="CHEBI:18420"/>
    </ligand>
</feature>
<feature type="binding site" evidence="1">
    <location>
        <begin position="92"/>
        <end position="96"/>
    </location>
    <ligand>
        <name>GMP</name>
        <dbReference type="ChEBI" id="CHEBI:58115"/>
    </ligand>
</feature>
<feature type="binding site" evidence="1">
    <location>
        <position position="92"/>
    </location>
    <ligand>
        <name>guanine</name>
        <dbReference type="ChEBI" id="CHEBI:16235"/>
    </ligand>
</feature>
<feature type="binding site" evidence="1">
    <location>
        <position position="92"/>
    </location>
    <ligand>
        <name>xanthine</name>
        <dbReference type="ChEBI" id="CHEBI:17712"/>
    </ligand>
</feature>
<feature type="binding site" evidence="1">
    <location>
        <begin position="134"/>
        <end position="135"/>
    </location>
    <ligand>
        <name>GMP</name>
        <dbReference type="ChEBI" id="CHEBI:58115"/>
    </ligand>
</feature>
<feature type="binding site" evidence="1">
    <location>
        <position position="135"/>
    </location>
    <ligand>
        <name>guanine</name>
        <dbReference type="ChEBI" id="CHEBI:16235"/>
    </ligand>
</feature>
<feature type="binding site" evidence="1">
    <location>
        <position position="135"/>
    </location>
    <ligand>
        <name>xanthine</name>
        <dbReference type="ChEBI" id="CHEBI:17712"/>
    </ligand>
</feature>
<organism>
    <name type="scientific">Enterobacter sp. (strain 638)</name>
    <dbReference type="NCBI Taxonomy" id="399742"/>
    <lineage>
        <taxon>Bacteria</taxon>
        <taxon>Pseudomonadati</taxon>
        <taxon>Pseudomonadota</taxon>
        <taxon>Gammaproteobacteria</taxon>
        <taxon>Enterobacterales</taxon>
        <taxon>Enterobacteriaceae</taxon>
        <taxon>Enterobacter</taxon>
    </lineage>
</organism>
<dbReference type="EC" id="2.4.2.-" evidence="1"/>
<dbReference type="EC" id="2.4.2.22" evidence="1"/>
<dbReference type="EMBL" id="CP000653">
    <property type="protein sequence ID" value="ABP59450.1"/>
    <property type="molecule type" value="Genomic_DNA"/>
</dbReference>
<dbReference type="RefSeq" id="WP_012016171.1">
    <property type="nucleotide sequence ID" value="NC_009436.1"/>
</dbReference>
<dbReference type="SMR" id="A4W6X0"/>
<dbReference type="STRING" id="399742.Ent638_0764"/>
<dbReference type="KEGG" id="ent:Ent638_0764"/>
<dbReference type="eggNOG" id="COG2236">
    <property type="taxonomic scope" value="Bacteria"/>
</dbReference>
<dbReference type="HOGENOM" id="CLU_080904_3_0_6"/>
<dbReference type="OrthoDB" id="9789690at2"/>
<dbReference type="UniPathway" id="UPA00602">
    <property type="reaction ID" value="UER00658"/>
</dbReference>
<dbReference type="UniPathway" id="UPA00909">
    <property type="reaction ID" value="UER00887"/>
</dbReference>
<dbReference type="Proteomes" id="UP000000230">
    <property type="component" value="Chromosome"/>
</dbReference>
<dbReference type="GO" id="GO:0005829">
    <property type="term" value="C:cytosol"/>
    <property type="evidence" value="ECO:0007669"/>
    <property type="project" value="TreeGrafter"/>
</dbReference>
<dbReference type="GO" id="GO:0005886">
    <property type="term" value="C:plasma membrane"/>
    <property type="evidence" value="ECO:0007669"/>
    <property type="project" value="UniProtKB-SubCell"/>
</dbReference>
<dbReference type="GO" id="GO:0052657">
    <property type="term" value="F:guanine phosphoribosyltransferase activity"/>
    <property type="evidence" value="ECO:0007669"/>
    <property type="project" value="RHEA"/>
</dbReference>
<dbReference type="GO" id="GO:0004422">
    <property type="term" value="F:hypoxanthine phosphoribosyltransferase activity"/>
    <property type="evidence" value="ECO:0007669"/>
    <property type="project" value="TreeGrafter"/>
</dbReference>
<dbReference type="GO" id="GO:0000287">
    <property type="term" value="F:magnesium ion binding"/>
    <property type="evidence" value="ECO:0007669"/>
    <property type="project" value="UniProtKB-UniRule"/>
</dbReference>
<dbReference type="GO" id="GO:0000310">
    <property type="term" value="F:xanthine phosphoribosyltransferase activity"/>
    <property type="evidence" value="ECO:0007669"/>
    <property type="project" value="UniProtKB-UniRule"/>
</dbReference>
<dbReference type="GO" id="GO:0032263">
    <property type="term" value="P:GMP salvage"/>
    <property type="evidence" value="ECO:0007669"/>
    <property type="project" value="UniProtKB-UniRule"/>
</dbReference>
<dbReference type="GO" id="GO:0032264">
    <property type="term" value="P:IMP salvage"/>
    <property type="evidence" value="ECO:0007669"/>
    <property type="project" value="TreeGrafter"/>
</dbReference>
<dbReference type="GO" id="GO:0006166">
    <property type="term" value="P:purine ribonucleoside salvage"/>
    <property type="evidence" value="ECO:0007669"/>
    <property type="project" value="UniProtKB-KW"/>
</dbReference>
<dbReference type="GO" id="GO:0032265">
    <property type="term" value="P:XMP salvage"/>
    <property type="evidence" value="ECO:0007669"/>
    <property type="project" value="UniProtKB-UniRule"/>
</dbReference>
<dbReference type="CDD" id="cd06223">
    <property type="entry name" value="PRTases_typeI"/>
    <property type="match status" value="1"/>
</dbReference>
<dbReference type="FunFam" id="3.40.50.2020:FF:000009">
    <property type="entry name" value="Xanthine phosphoribosyltransferase"/>
    <property type="match status" value="1"/>
</dbReference>
<dbReference type="Gene3D" id="3.40.50.2020">
    <property type="match status" value="1"/>
</dbReference>
<dbReference type="HAMAP" id="MF_01903">
    <property type="entry name" value="XGPRT"/>
    <property type="match status" value="1"/>
</dbReference>
<dbReference type="InterPro" id="IPR000836">
    <property type="entry name" value="PRibTrfase_dom"/>
</dbReference>
<dbReference type="InterPro" id="IPR029057">
    <property type="entry name" value="PRTase-like"/>
</dbReference>
<dbReference type="InterPro" id="IPR023747">
    <property type="entry name" value="Xanthine_Guanine_PRibTrfase"/>
</dbReference>
<dbReference type="NCBIfam" id="NF006613">
    <property type="entry name" value="PRK09177.1"/>
    <property type="match status" value="1"/>
</dbReference>
<dbReference type="PANTHER" id="PTHR39563">
    <property type="entry name" value="XANTHINE PHOSPHORIBOSYLTRANSFERASE"/>
    <property type="match status" value="1"/>
</dbReference>
<dbReference type="PANTHER" id="PTHR39563:SF1">
    <property type="entry name" value="XANTHINE-GUANINE PHOSPHORIBOSYLTRANSFERASE"/>
    <property type="match status" value="1"/>
</dbReference>
<dbReference type="Pfam" id="PF00156">
    <property type="entry name" value="Pribosyltran"/>
    <property type="match status" value="1"/>
</dbReference>
<dbReference type="SUPFAM" id="SSF53271">
    <property type="entry name" value="PRTase-like"/>
    <property type="match status" value="1"/>
</dbReference>
<dbReference type="PROSITE" id="PS00103">
    <property type="entry name" value="PUR_PYR_PR_TRANSFER"/>
    <property type="match status" value="1"/>
</dbReference>
<evidence type="ECO:0000255" key="1">
    <source>
        <dbReference type="HAMAP-Rule" id="MF_01903"/>
    </source>
</evidence>
<gene>
    <name evidence="1" type="primary">gpt</name>
    <name type="ordered locus">Ent638_0764</name>
</gene>
<name>XGPT_ENT38</name>
<reference key="1">
    <citation type="journal article" date="2010" name="PLoS Genet.">
        <title>Genome sequence of the plant growth promoting endophytic bacterium Enterobacter sp. 638.</title>
        <authorList>
            <person name="Taghavi S."/>
            <person name="van der Lelie D."/>
            <person name="Hoffman A."/>
            <person name="Zhang Y.B."/>
            <person name="Walla M.D."/>
            <person name="Vangronsveld J."/>
            <person name="Newman L."/>
            <person name="Monchy S."/>
        </authorList>
    </citation>
    <scope>NUCLEOTIDE SEQUENCE [LARGE SCALE GENOMIC DNA]</scope>
    <source>
        <strain>638</strain>
    </source>
</reference>
<keyword id="KW-0997">Cell inner membrane</keyword>
<keyword id="KW-1003">Cell membrane</keyword>
<keyword id="KW-0328">Glycosyltransferase</keyword>
<keyword id="KW-0460">Magnesium</keyword>
<keyword id="KW-0472">Membrane</keyword>
<keyword id="KW-0479">Metal-binding</keyword>
<keyword id="KW-0660">Purine salvage</keyword>
<keyword id="KW-0808">Transferase</keyword>
<sequence>MSEKYVVTWDMLQIHARKLAARLMPSEQWKGIIAVSRGGLVPGALLARELGIRHVDTVCISSYDHDNQRELTVLKRAEGDGEGFIVIDDLVDTGGTAVAIRDMYPKAHFVTIFAKPAGQPLVDDYVIDIPQDTWIEQPWDMGVAFVPPISGR</sequence>
<accession>A4W6X0</accession>